<name>TUB_RAT</name>
<gene>
    <name type="primary">Tub</name>
</gene>
<feature type="chain" id="PRO_0000186465" description="Tubby protein homolog">
    <location>
        <begin position="1"/>
        <end position="505"/>
    </location>
</feature>
<feature type="region of interest" description="Disordered" evidence="2">
    <location>
        <begin position="35"/>
        <end position="243"/>
    </location>
</feature>
<feature type="compositionally biased region" description="Low complexity" evidence="2">
    <location>
        <begin position="70"/>
        <end position="87"/>
    </location>
</feature>
<feature type="compositionally biased region" description="Acidic residues" evidence="2">
    <location>
        <begin position="196"/>
        <end position="205"/>
    </location>
</feature>
<feature type="compositionally biased region" description="Low complexity" evidence="2">
    <location>
        <begin position="206"/>
        <end position="220"/>
    </location>
</feature>
<feature type="sequence conflict" description="In Ref. 2; AAD09251." evidence="4" ref="2">
    <original>LRQELAAVCYETNVLGFK</original>
    <variation>CARSWQPCAMRQMSRLQ</variation>
    <location>
        <begin position="362"/>
        <end position="379"/>
    </location>
</feature>
<evidence type="ECO:0000250" key="1"/>
<evidence type="ECO:0000256" key="2">
    <source>
        <dbReference type="SAM" id="MobiDB-lite"/>
    </source>
</evidence>
<evidence type="ECO:0000269" key="3">
    <source>
    </source>
</evidence>
<evidence type="ECO:0000305" key="4"/>
<protein>
    <recommendedName>
        <fullName>Tubby protein homolog</fullName>
    </recommendedName>
</protein>
<comment type="function">
    <text evidence="1">Functions in signal transduction from heterotrimeric G protein-coupled receptors. Binds to membranes containing phosphatidylinositol 4,5-bisphosphate. Can bind DNA (in vitro). May contribute to the regulation of transcription in the nucleus. Could be involved in the hypothalamic regulation of body weight (By similarity). Contribute to stimulation of phagocytosis of apoptotic retinal pigment epithelium (RPE) cells and macrophages (By similarity).</text>
</comment>
<comment type="subunit">
    <text evidence="1">Interacts with GNAQ. Interacts with TULP1.</text>
</comment>
<comment type="subcellular location">
    <subcellularLocation>
        <location evidence="3">Cytoplasm</location>
    </subcellularLocation>
    <subcellularLocation>
        <location evidence="1">Nucleus</location>
    </subcellularLocation>
    <subcellularLocation>
        <location evidence="3">Secreted</location>
    </subcellularLocation>
    <subcellularLocation>
        <location evidence="1">Cell membrane</location>
        <topology evidence="1">Peripheral membrane protein</topology>
        <orientation evidence="1">Cytoplasmic side</orientation>
    </subcellularLocation>
    <text evidence="1">Binds phospholipid and is anchored to the plasma membrane through binding phosphatidylinositol 4,5-bisphosphate. Is released upon activation of phospholipase C. Translocates from the plasma membrane to the nucleus upon activation of guanine nucleotide-binding protein G(q) subunit alpha. Does not have a cleavable signal peptide and is secreted by a non-conventional pathway (By similarity).</text>
</comment>
<comment type="similarity">
    <text evidence="4">Belongs to the TUB family.</text>
</comment>
<sequence length="505" mass="55318">MTSKPHSDWIPYSVLDDEGSNLRQQKLDRQRALLEQKQKKKRQEPLMVQANADGRPRSRRARQSEEQAPLVESYLSSSGSTSYQVQEADSLASVQPGATRPPAPASAKKTKGAAASGGQGGAPRKEKKGKHKGTSGPATLAEDKSEAQGPVQILTVGQSDHAKDAGETAAGGGAQPSGQDLRATMQRKGISSSMSFDEEEDEDENSSSSSQLNSNTRPSSATSRKSTREAASAPSPAAPEPPVDIEVQDLEEFALRPAPQGITIKCRITRDKKGMDRGMYPTYFLHLDREDGKKVFLLAGRKRKKSKTSNYLISVDPTDLSRGGDSYIGKLRSNLMGTKFTVYDNGVNPQKASSSTLESGTLRQELAAVCYETNVLGFKGPRKMSVIVPGMNMVHERVCIRPRNEHETLLARWQNKNTESIIELQNKTPVWNDDTQSYVLNFHGRVTQASVKNFQIIHGNDPDYIVMQFGRVAEDVFTMDYNYPLCALQAFAIALSSFDSKLACE</sequence>
<dbReference type="EMBL" id="AB011544">
    <property type="protein sequence ID" value="BAA32734.1"/>
    <property type="molecule type" value="mRNA"/>
</dbReference>
<dbReference type="EMBL" id="U92546">
    <property type="protein sequence ID" value="AAD09251.1"/>
    <property type="molecule type" value="mRNA"/>
</dbReference>
<dbReference type="RefSeq" id="NP_037209.1">
    <property type="nucleotide sequence ID" value="NM_013077.2"/>
</dbReference>
<dbReference type="SMR" id="O88808"/>
<dbReference type="BioGRID" id="247638">
    <property type="interactions" value="1"/>
</dbReference>
<dbReference type="FunCoup" id="O88808">
    <property type="interactions" value="1168"/>
</dbReference>
<dbReference type="STRING" id="10116.ENSRNOP00000064486"/>
<dbReference type="iPTMnet" id="O88808"/>
<dbReference type="PhosphoSitePlus" id="O88808"/>
<dbReference type="jPOST" id="O88808"/>
<dbReference type="PaxDb" id="10116-ENSRNOP00000064486"/>
<dbReference type="Ensembl" id="ENSRNOT00000074636.3">
    <property type="protein sequence ID" value="ENSRNOP00000064486.1"/>
    <property type="gene ID" value="ENSRNOG00000046566.3"/>
</dbReference>
<dbReference type="GeneID" id="25609"/>
<dbReference type="KEGG" id="rno:25609"/>
<dbReference type="AGR" id="RGD:3918"/>
<dbReference type="CTD" id="7275"/>
<dbReference type="RGD" id="3918">
    <property type="gene designation" value="Tub"/>
</dbReference>
<dbReference type="eggNOG" id="KOG2502">
    <property type="taxonomic scope" value="Eukaryota"/>
</dbReference>
<dbReference type="GeneTree" id="ENSGT00940000158372"/>
<dbReference type="HOGENOM" id="CLU_028236_1_1_1"/>
<dbReference type="InParanoid" id="O88808"/>
<dbReference type="OrthoDB" id="78144at9989"/>
<dbReference type="PhylomeDB" id="O88808"/>
<dbReference type="PRO" id="PR:O88808"/>
<dbReference type="Proteomes" id="UP000002494">
    <property type="component" value="Chromosome 1"/>
</dbReference>
<dbReference type="Bgee" id="ENSRNOG00000046566">
    <property type="expression patterns" value="Expressed in frontal cortex and 11 other cell types or tissues"/>
</dbReference>
<dbReference type="GO" id="GO:0005929">
    <property type="term" value="C:cilium"/>
    <property type="evidence" value="ECO:0000266"/>
    <property type="project" value="RGD"/>
</dbReference>
<dbReference type="GO" id="GO:0005737">
    <property type="term" value="C:cytoplasm"/>
    <property type="evidence" value="ECO:0000266"/>
    <property type="project" value="RGD"/>
</dbReference>
<dbReference type="GO" id="GO:0005829">
    <property type="term" value="C:cytosol"/>
    <property type="evidence" value="ECO:0000266"/>
    <property type="project" value="RGD"/>
</dbReference>
<dbReference type="GO" id="GO:0005576">
    <property type="term" value="C:extracellular region"/>
    <property type="evidence" value="ECO:0000266"/>
    <property type="project" value="RGD"/>
</dbReference>
<dbReference type="GO" id="GO:0005634">
    <property type="term" value="C:nucleus"/>
    <property type="evidence" value="ECO:0000314"/>
    <property type="project" value="RGD"/>
</dbReference>
<dbReference type="GO" id="GO:0005886">
    <property type="term" value="C:plasma membrane"/>
    <property type="evidence" value="ECO:0000314"/>
    <property type="project" value="RGD"/>
</dbReference>
<dbReference type="GO" id="GO:0001664">
    <property type="term" value="F:G protein-coupled receptor binding"/>
    <property type="evidence" value="ECO:0000266"/>
    <property type="project" value="RGD"/>
</dbReference>
<dbReference type="GO" id="GO:0120160">
    <property type="term" value="F:intraciliary transport particle A binding"/>
    <property type="evidence" value="ECO:0000266"/>
    <property type="project" value="RGD"/>
</dbReference>
<dbReference type="GO" id="GO:0044877">
    <property type="term" value="F:protein-containing complex binding"/>
    <property type="evidence" value="ECO:0000266"/>
    <property type="project" value="RGD"/>
</dbReference>
<dbReference type="GO" id="GO:0042073">
    <property type="term" value="P:intraciliary transport"/>
    <property type="evidence" value="ECO:0000266"/>
    <property type="project" value="RGD"/>
</dbReference>
<dbReference type="GO" id="GO:0006910">
    <property type="term" value="P:phagocytosis, recognition"/>
    <property type="evidence" value="ECO:0000266"/>
    <property type="project" value="RGD"/>
</dbReference>
<dbReference type="GO" id="GO:0045494">
    <property type="term" value="P:photoreceptor cell maintenance"/>
    <property type="evidence" value="ECO:0000266"/>
    <property type="project" value="RGD"/>
</dbReference>
<dbReference type="GO" id="GO:0050766">
    <property type="term" value="P:positive regulation of phagocytosis"/>
    <property type="evidence" value="ECO:0000250"/>
    <property type="project" value="UniProtKB"/>
</dbReference>
<dbReference type="GO" id="GO:0061512">
    <property type="term" value="P:protein localization to cilium"/>
    <property type="evidence" value="ECO:0000266"/>
    <property type="project" value="RGD"/>
</dbReference>
<dbReference type="GO" id="GO:1903546">
    <property type="term" value="P:protein localization to photoreceptor outer segment"/>
    <property type="evidence" value="ECO:0000266"/>
    <property type="project" value="RGD"/>
</dbReference>
<dbReference type="GO" id="GO:0097500">
    <property type="term" value="P:receptor localization to non-motile cilium"/>
    <property type="evidence" value="ECO:0000266"/>
    <property type="project" value="RGD"/>
</dbReference>
<dbReference type="GO" id="GO:0008277">
    <property type="term" value="P:regulation of G protein-coupled receptor signaling pathway"/>
    <property type="evidence" value="ECO:0000266"/>
    <property type="project" value="RGD"/>
</dbReference>
<dbReference type="GO" id="GO:0042220">
    <property type="term" value="P:response to cocaine"/>
    <property type="evidence" value="ECO:0000270"/>
    <property type="project" value="RGD"/>
</dbReference>
<dbReference type="GO" id="GO:0009725">
    <property type="term" value="P:response to hormone"/>
    <property type="evidence" value="ECO:0000270"/>
    <property type="project" value="RGD"/>
</dbReference>
<dbReference type="GO" id="GO:0060041">
    <property type="term" value="P:retina development in camera-type eye"/>
    <property type="evidence" value="ECO:0000266"/>
    <property type="project" value="RGD"/>
</dbReference>
<dbReference type="GO" id="GO:0007605">
    <property type="term" value="P:sensory perception of sound"/>
    <property type="evidence" value="ECO:0000266"/>
    <property type="project" value="RGD"/>
</dbReference>
<dbReference type="FunFam" id="3.20.90.10:FF:000001">
    <property type="entry name" value="Tubby-like protein"/>
    <property type="match status" value="1"/>
</dbReference>
<dbReference type="Gene3D" id="3.20.90.10">
    <property type="entry name" value="Tubby Protein, Chain A"/>
    <property type="match status" value="1"/>
</dbReference>
<dbReference type="InterPro" id="IPR025659">
    <property type="entry name" value="Tubby-like_C"/>
</dbReference>
<dbReference type="InterPro" id="IPR000007">
    <property type="entry name" value="Tubby_C"/>
</dbReference>
<dbReference type="InterPro" id="IPR018066">
    <property type="entry name" value="Tubby_C_CS"/>
</dbReference>
<dbReference type="InterPro" id="IPR005398">
    <property type="entry name" value="Tubby_N"/>
</dbReference>
<dbReference type="PANTHER" id="PTHR16517:SF20">
    <property type="entry name" value="TUBBY PROTEIN HOMOLOG"/>
    <property type="match status" value="1"/>
</dbReference>
<dbReference type="PANTHER" id="PTHR16517">
    <property type="entry name" value="TUBBY-RELATED"/>
    <property type="match status" value="1"/>
</dbReference>
<dbReference type="Pfam" id="PF01167">
    <property type="entry name" value="Tub"/>
    <property type="match status" value="1"/>
</dbReference>
<dbReference type="Pfam" id="PF16322">
    <property type="entry name" value="Tub_N"/>
    <property type="match status" value="1"/>
</dbReference>
<dbReference type="PRINTS" id="PR01573">
    <property type="entry name" value="SUPERTUBBY"/>
</dbReference>
<dbReference type="PRINTS" id="PR01574">
    <property type="entry name" value="TUBBYPROTEIN"/>
</dbReference>
<dbReference type="SUPFAM" id="SSF54518">
    <property type="entry name" value="Tubby C-terminal domain-like"/>
    <property type="match status" value="1"/>
</dbReference>
<dbReference type="PROSITE" id="PS01200">
    <property type="entry name" value="TUB_1"/>
    <property type="match status" value="1"/>
</dbReference>
<dbReference type="PROSITE" id="PS01201">
    <property type="entry name" value="TUB_2"/>
    <property type="match status" value="1"/>
</dbReference>
<accession>O88808</accession>
<accession>Q9Z1A2</accession>
<keyword id="KW-1003">Cell membrane</keyword>
<keyword id="KW-0963">Cytoplasm</keyword>
<keyword id="KW-0472">Membrane</keyword>
<keyword id="KW-0539">Nucleus</keyword>
<keyword id="KW-0550">Obesity</keyword>
<keyword id="KW-0581">Phagocytosis</keyword>
<keyword id="KW-1185">Reference proteome</keyword>
<keyword id="KW-0964">Secreted</keyword>
<keyword id="KW-0716">Sensory transduction</keyword>
<organism>
    <name type="scientific">Rattus norvegicus</name>
    <name type="common">Rat</name>
    <dbReference type="NCBI Taxonomy" id="10116"/>
    <lineage>
        <taxon>Eukaryota</taxon>
        <taxon>Metazoa</taxon>
        <taxon>Chordata</taxon>
        <taxon>Craniata</taxon>
        <taxon>Vertebrata</taxon>
        <taxon>Euteleostomi</taxon>
        <taxon>Mammalia</taxon>
        <taxon>Eutheria</taxon>
        <taxon>Euarchontoglires</taxon>
        <taxon>Glires</taxon>
        <taxon>Rodentia</taxon>
        <taxon>Myomorpha</taxon>
        <taxon>Muroidea</taxon>
        <taxon>Muridae</taxon>
        <taxon>Murinae</taxon>
        <taxon>Rattus</taxon>
    </lineage>
</organism>
<reference key="1">
    <citation type="submission" date="1998-02" db="EMBL/GenBank/DDBJ databases">
        <title>Molecular cloning of rat TUBBY gene.</title>
        <authorList>
            <person name="Miyakita A."/>
            <person name="Okuno S."/>
            <person name="Watanabe T.K."/>
            <person name="Oga K."/>
            <person name="Tsuji A."/>
            <person name="Hishigaki H."/>
            <person name="Suto T."/>
            <person name="Nakagawa K."/>
            <person name="Nakahara Y."/>
            <person name="Higashi K."/>
        </authorList>
    </citation>
    <scope>NUCLEOTIDE SEQUENCE [MRNA]</scope>
    <source>
        <tissue>Brain</tissue>
    </source>
</reference>
<reference key="2">
    <citation type="submission" date="1997-03" db="EMBL/GenBank/DDBJ databases">
        <title>Cloning and expression of the rat gene tubby.</title>
        <authorList>
            <person name="Koritschoner N.P."/>
            <person name="Alvarez-Dolado M."/>
            <person name="Zenke M."/>
        </authorList>
    </citation>
    <scope>NUCLEOTIDE SEQUENCE [MRNA] OF 291-404</scope>
    <source>
        <strain>Wistar</strain>
    </source>
</reference>
<reference key="3">
    <citation type="journal article" date="2009" name="FEBS Lett.">
        <title>Unconventional secretion of tubby and tubby-like protein 1.</title>
        <authorList>
            <person name="Caberoy N.B."/>
            <person name="Li W."/>
        </authorList>
    </citation>
    <scope>SUBCELLULAR LOCATION</scope>
</reference>
<proteinExistence type="evidence at transcript level"/>